<keyword id="KW-0997">Cell inner membrane</keyword>
<keyword id="KW-1003">Cell membrane</keyword>
<keyword id="KW-0472">Membrane</keyword>
<keyword id="KW-1185">Reference proteome</keyword>
<keyword id="KW-0812">Transmembrane</keyword>
<keyword id="KW-1133">Transmembrane helix</keyword>
<comment type="function">
    <text evidence="1">Plays a role in cell envelope biogenesis, maintenance of cell envelope integrity and membrane homeostasis.</text>
</comment>
<comment type="subcellular location">
    <subcellularLocation>
        <location evidence="1">Cell inner membrane</location>
        <topology evidence="1">Multi-pass membrane protein</topology>
    </subcellularLocation>
</comment>
<comment type="similarity">
    <text evidence="1">Belongs to the YciB family.</text>
</comment>
<sequence>MKFLFDLFPIILFFAAFKLWGIFTATAVAIAATLAQVAWVAFRHRKVDTMLWVSLGVIVVFGGATLVLHDEKFIQWKPTVLYWLFAVGLVAARYAFGKNLIEKMMGKQLTLPEPVWDKLNLAWAAFFAALGVTNLYVVRNFTESQWVNFKLFGTTGAIVVFVILQSLWLAKYLKEE</sequence>
<accession>Q62JM5</accession>
<feature type="chain" id="PRO_1000020994" description="Inner membrane-spanning protein YciB">
    <location>
        <begin position="1"/>
        <end position="176"/>
    </location>
</feature>
<feature type="transmembrane region" description="Helical" evidence="1">
    <location>
        <begin position="3"/>
        <end position="23"/>
    </location>
</feature>
<feature type="transmembrane region" description="Helical" evidence="1">
    <location>
        <begin position="49"/>
        <end position="69"/>
    </location>
</feature>
<feature type="transmembrane region" description="Helical" evidence="1">
    <location>
        <begin position="72"/>
        <end position="92"/>
    </location>
</feature>
<feature type="transmembrane region" description="Helical" evidence="1">
    <location>
        <begin position="118"/>
        <end position="138"/>
    </location>
</feature>
<feature type="transmembrane region" description="Helical" evidence="1">
    <location>
        <begin position="149"/>
        <end position="169"/>
    </location>
</feature>
<name>YCIB_BURMA</name>
<proteinExistence type="inferred from homology"/>
<protein>
    <recommendedName>
        <fullName evidence="1">Inner membrane-spanning protein YciB</fullName>
    </recommendedName>
</protein>
<gene>
    <name evidence="1" type="primary">yciB</name>
    <name type="ordered locus">BMA1442</name>
</gene>
<evidence type="ECO:0000255" key="1">
    <source>
        <dbReference type="HAMAP-Rule" id="MF_00189"/>
    </source>
</evidence>
<dbReference type="EMBL" id="CP000010">
    <property type="protein sequence ID" value="AAU47665.1"/>
    <property type="molecule type" value="Genomic_DNA"/>
</dbReference>
<dbReference type="RefSeq" id="WP_004192037.1">
    <property type="nucleotide sequence ID" value="NC_006348.1"/>
</dbReference>
<dbReference type="RefSeq" id="YP_103094.1">
    <property type="nucleotide sequence ID" value="NC_006348.1"/>
</dbReference>
<dbReference type="KEGG" id="bma:BMA1442"/>
<dbReference type="PATRIC" id="fig|243160.12.peg.1483"/>
<dbReference type="eggNOG" id="COG2917">
    <property type="taxonomic scope" value="Bacteria"/>
</dbReference>
<dbReference type="HOGENOM" id="CLU_089554_2_0_4"/>
<dbReference type="Proteomes" id="UP000006693">
    <property type="component" value="Chromosome 1"/>
</dbReference>
<dbReference type="GO" id="GO:0005886">
    <property type="term" value="C:plasma membrane"/>
    <property type="evidence" value="ECO:0007669"/>
    <property type="project" value="UniProtKB-SubCell"/>
</dbReference>
<dbReference type="HAMAP" id="MF_00189">
    <property type="entry name" value="YciB"/>
    <property type="match status" value="1"/>
</dbReference>
<dbReference type="InterPro" id="IPR006008">
    <property type="entry name" value="YciB"/>
</dbReference>
<dbReference type="NCBIfam" id="TIGR00997">
    <property type="entry name" value="ispZ"/>
    <property type="match status" value="1"/>
</dbReference>
<dbReference type="NCBIfam" id="NF001325">
    <property type="entry name" value="PRK00259.1-3"/>
    <property type="match status" value="1"/>
</dbReference>
<dbReference type="PANTHER" id="PTHR36917:SF1">
    <property type="entry name" value="INNER MEMBRANE-SPANNING PROTEIN YCIB"/>
    <property type="match status" value="1"/>
</dbReference>
<dbReference type="PANTHER" id="PTHR36917">
    <property type="entry name" value="INTRACELLULAR SEPTATION PROTEIN A-RELATED"/>
    <property type="match status" value="1"/>
</dbReference>
<dbReference type="Pfam" id="PF04279">
    <property type="entry name" value="IspA"/>
    <property type="match status" value="1"/>
</dbReference>
<reference key="1">
    <citation type="journal article" date="2004" name="Proc. Natl. Acad. Sci. U.S.A.">
        <title>Structural flexibility in the Burkholderia mallei genome.</title>
        <authorList>
            <person name="Nierman W.C."/>
            <person name="DeShazer D."/>
            <person name="Kim H.S."/>
            <person name="Tettelin H."/>
            <person name="Nelson K.E."/>
            <person name="Feldblyum T.V."/>
            <person name="Ulrich R.L."/>
            <person name="Ronning C.M."/>
            <person name="Brinkac L.M."/>
            <person name="Daugherty S.C."/>
            <person name="Davidsen T.D."/>
            <person name="DeBoy R.T."/>
            <person name="Dimitrov G."/>
            <person name="Dodson R.J."/>
            <person name="Durkin A.S."/>
            <person name="Gwinn M.L."/>
            <person name="Haft D.H."/>
            <person name="Khouri H.M."/>
            <person name="Kolonay J.F."/>
            <person name="Madupu R."/>
            <person name="Mohammoud Y."/>
            <person name="Nelson W.C."/>
            <person name="Radune D."/>
            <person name="Romero C.M."/>
            <person name="Sarria S."/>
            <person name="Selengut J."/>
            <person name="Shamblin C."/>
            <person name="Sullivan S.A."/>
            <person name="White O."/>
            <person name="Yu Y."/>
            <person name="Zafar N."/>
            <person name="Zhou L."/>
            <person name="Fraser C.M."/>
        </authorList>
    </citation>
    <scope>NUCLEOTIDE SEQUENCE [LARGE SCALE GENOMIC DNA]</scope>
    <source>
        <strain>ATCC 23344</strain>
    </source>
</reference>
<organism>
    <name type="scientific">Burkholderia mallei (strain ATCC 23344)</name>
    <dbReference type="NCBI Taxonomy" id="243160"/>
    <lineage>
        <taxon>Bacteria</taxon>
        <taxon>Pseudomonadati</taxon>
        <taxon>Pseudomonadota</taxon>
        <taxon>Betaproteobacteria</taxon>
        <taxon>Burkholderiales</taxon>
        <taxon>Burkholderiaceae</taxon>
        <taxon>Burkholderia</taxon>
        <taxon>pseudomallei group</taxon>
    </lineage>
</organism>